<proteinExistence type="inferred from homology"/>
<feature type="chain" id="PRO_0000412738" description="3'-5' ssDNA/RNA exonuclease TatD">
    <location>
        <begin position="1"/>
        <end position="260"/>
    </location>
</feature>
<feature type="binding site" evidence="1">
    <location>
        <position position="91"/>
    </location>
    <ligand>
        <name>a divalent metal cation</name>
        <dbReference type="ChEBI" id="CHEBI:60240"/>
    </ligand>
</feature>
<feature type="binding site" evidence="1">
    <location>
        <position position="127"/>
    </location>
    <ligand>
        <name>a divalent metal cation</name>
        <dbReference type="ChEBI" id="CHEBI:60240"/>
    </ligand>
</feature>
<feature type="binding site" evidence="1">
    <location>
        <position position="152"/>
    </location>
    <ligand>
        <name>a divalent metal cation</name>
        <dbReference type="ChEBI" id="CHEBI:60240"/>
    </ligand>
</feature>
<keyword id="KW-0963">Cytoplasm</keyword>
<keyword id="KW-0269">Exonuclease</keyword>
<keyword id="KW-0378">Hydrolase</keyword>
<keyword id="KW-0460">Magnesium</keyword>
<keyword id="KW-0479">Metal-binding</keyword>
<keyword id="KW-0540">Nuclease</keyword>
<organism>
    <name type="scientific">Enterobacter sp. (strain 638)</name>
    <dbReference type="NCBI Taxonomy" id="399742"/>
    <lineage>
        <taxon>Bacteria</taxon>
        <taxon>Pseudomonadati</taxon>
        <taxon>Pseudomonadota</taxon>
        <taxon>Gammaproteobacteria</taxon>
        <taxon>Enterobacterales</taxon>
        <taxon>Enterobacteriaceae</taxon>
        <taxon>Enterobacter</taxon>
    </lineage>
</organism>
<sequence>MFDIGLNLTSPQFANDRDDVVARAFAAGVKGLLLTGTNLHESEHAQQLAQGYERCWSTAGVHPHDSSQWTDESAETLYKLAKTEEVVAIGECGLDFNRNFSTPVEQEAAFTAQLAIAAELEMPVFMHCRDAHERFLTLLEPWRDKLPGAVLHCFTGSRQEAVECLNRGLYLGITGWVCDERRGLELRELLPVIPADRLLVETDAPYLLPRDMKPKPASRRNEPAYLGHIVERIAHWRGEERQRLDAQTDENVRRLFGITF</sequence>
<name>TATD_ENT38</name>
<gene>
    <name evidence="1" type="primary">tatD</name>
    <name type="ordered locus">Ent638_3954</name>
</gene>
<dbReference type="EC" id="3.1.11.-" evidence="1"/>
<dbReference type="EC" id="3.1.13.-" evidence="1"/>
<dbReference type="EMBL" id="CP000653">
    <property type="protein sequence ID" value="ABP62609.1"/>
    <property type="status" value="ALT_INIT"/>
    <property type="molecule type" value="Genomic_DNA"/>
</dbReference>
<dbReference type="RefSeq" id="WP_041689559.1">
    <property type="nucleotide sequence ID" value="NC_009436.1"/>
</dbReference>
<dbReference type="SMR" id="A4WFX9"/>
<dbReference type="STRING" id="399742.Ent638_3954"/>
<dbReference type="KEGG" id="ent:Ent638_3954"/>
<dbReference type="eggNOG" id="COG0084">
    <property type="taxonomic scope" value="Bacteria"/>
</dbReference>
<dbReference type="HOGENOM" id="CLU_031506_1_2_6"/>
<dbReference type="OrthoDB" id="9810005at2"/>
<dbReference type="Proteomes" id="UP000000230">
    <property type="component" value="Chromosome"/>
</dbReference>
<dbReference type="GO" id="GO:0005829">
    <property type="term" value="C:cytosol"/>
    <property type="evidence" value="ECO:0007669"/>
    <property type="project" value="TreeGrafter"/>
</dbReference>
<dbReference type="GO" id="GO:0000175">
    <property type="term" value="F:3'-5'-RNA exonuclease activity"/>
    <property type="evidence" value="ECO:0007669"/>
    <property type="project" value="UniProtKB-UniRule"/>
</dbReference>
<dbReference type="GO" id="GO:0000287">
    <property type="term" value="F:magnesium ion binding"/>
    <property type="evidence" value="ECO:0007669"/>
    <property type="project" value="UniProtKB-UniRule"/>
</dbReference>
<dbReference type="GO" id="GO:0008310">
    <property type="term" value="F:single-stranded DNA 3'-5' DNA exonuclease activity"/>
    <property type="evidence" value="ECO:0007669"/>
    <property type="project" value="UniProtKB-UniRule"/>
</dbReference>
<dbReference type="CDD" id="cd01310">
    <property type="entry name" value="TatD_DNAse"/>
    <property type="match status" value="1"/>
</dbReference>
<dbReference type="FunFam" id="3.20.20.140:FF:000018">
    <property type="entry name" value="3'-5' ssDNA/RNA exonuclease TatD"/>
    <property type="match status" value="1"/>
</dbReference>
<dbReference type="Gene3D" id="3.20.20.140">
    <property type="entry name" value="Metal-dependent hydrolases"/>
    <property type="match status" value="1"/>
</dbReference>
<dbReference type="HAMAP" id="MF_00901">
    <property type="entry name" value="TatD_exonuclease"/>
    <property type="match status" value="1"/>
</dbReference>
<dbReference type="InterPro" id="IPR018228">
    <property type="entry name" value="DNase_TatD-rel_CS"/>
</dbReference>
<dbReference type="InterPro" id="IPR024918">
    <property type="entry name" value="Exonuc_TatD"/>
</dbReference>
<dbReference type="InterPro" id="IPR032466">
    <property type="entry name" value="Metal_Hydrolase"/>
</dbReference>
<dbReference type="InterPro" id="IPR001130">
    <property type="entry name" value="TatD-like"/>
</dbReference>
<dbReference type="InterPro" id="IPR015991">
    <property type="entry name" value="TatD/YcfH-like"/>
</dbReference>
<dbReference type="NCBIfam" id="NF007745">
    <property type="entry name" value="PRK10425.1"/>
    <property type="match status" value="1"/>
</dbReference>
<dbReference type="NCBIfam" id="TIGR00010">
    <property type="entry name" value="YchF/TatD family DNA exonuclease"/>
    <property type="match status" value="1"/>
</dbReference>
<dbReference type="PANTHER" id="PTHR46124">
    <property type="entry name" value="D-AMINOACYL-TRNA DEACYLASE"/>
    <property type="match status" value="1"/>
</dbReference>
<dbReference type="PANTHER" id="PTHR46124:SF2">
    <property type="entry name" value="D-AMINOACYL-TRNA DEACYLASE"/>
    <property type="match status" value="1"/>
</dbReference>
<dbReference type="Pfam" id="PF01026">
    <property type="entry name" value="TatD_DNase"/>
    <property type="match status" value="1"/>
</dbReference>
<dbReference type="PIRSF" id="PIRSF005902">
    <property type="entry name" value="DNase_TatD"/>
    <property type="match status" value="1"/>
</dbReference>
<dbReference type="SUPFAM" id="SSF51556">
    <property type="entry name" value="Metallo-dependent hydrolases"/>
    <property type="match status" value="1"/>
</dbReference>
<dbReference type="PROSITE" id="PS01090">
    <property type="entry name" value="TATD_2"/>
    <property type="match status" value="1"/>
</dbReference>
<dbReference type="PROSITE" id="PS01091">
    <property type="entry name" value="TATD_3"/>
    <property type="match status" value="1"/>
</dbReference>
<protein>
    <recommendedName>
        <fullName evidence="1">3'-5' ssDNA/RNA exonuclease TatD</fullName>
        <ecNumber evidence="1">3.1.11.-</ecNumber>
        <ecNumber evidence="1">3.1.13.-</ecNumber>
    </recommendedName>
    <alternativeName>
        <fullName evidence="1">DNase TatD</fullName>
    </alternativeName>
</protein>
<evidence type="ECO:0000255" key="1">
    <source>
        <dbReference type="HAMAP-Rule" id="MF_00901"/>
    </source>
</evidence>
<evidence type="ECO:0000305" key="2"/>
<reference key="1">
    <citation type="journal article" date="2010" name="PLoS Genet.">
        <title>Genome sequence of the plant growth promoting endophytic bacterium Enterobacter sp. 638.</title>
        <authorList>
            <person name="Taghavi S."/>
            <person name="van der Lelie D."/>
            <person name="Hoffman A."/>
            <person name="Zhang Y.B."/>
            <person name="Walla M.D."/>
            <person name="Vangronsveld J."/>
            <person name="Newman L."/>
            <person name="Monchy S."/>
        </authorList>
    </citation>
    <scope>NUCLEOTIDE SEQUENCE [LARGE SCALE GENOMIC DNA]</scope>
    <source>
        <strain>638</strain>
    </source>
</reference>
<accession>A4WFX9</accession>
<comment type="function">
    <text evidence="1">3'-5' exonuclease that prefers single-stranded DNA and RNA. May play a role in the H(2)O(2)-induced DNA damage repair.</text>
</comment>
<comment type="cofactor">
    <cofactor evidence="1">
        <name>Mg(2+)</name>
        <dbReference type="ChEBI" id="CHEBI:18420"/>
    </cofactor>
</comment>
<comment type="subunit">
    <text evidence="1">Monomer.</text>
</comment>
<comment type="subcellular location">
    <subcellularLocation>
        <location evidence="1">Cytoplasm</location>
    </subcellularLocation>
</comment>
<comment type="similarity">
    <text evidence="1">Belongs to the metallo-dependent hydrolases superfamily. TatD-type hydrolase family. TatD subfamily.</text>
</comment>
<comment type="sequence caution" evidence="2">
    <conflict type="erroneous initiation">
        <sequence resource="EMBL-CDS" id="ABP62609"/>
    </conflict>
    <text>Extended N-terminus.</text>
</comment>